<sequence length="150" mass="16643">MTTRTLRFYALVGFLVFLDQVTKYLAHAYLARDFIVIPNLFRLTLAKNSGAAFSFGTGFSWLFFLLGIIALIFIGWFLPRTTGSIVFLALLQGGIAGNVFDRLFKPPYFGNGEVVDFLNTPLFSGVVFNIADLFILAGVFGTFLFLKGSK</sequence>
<accession>Q83I41</accession>
<comment type="function">
    <text evidence="1">This protein specifically catalyzes the removal of signal peptides from prolipoproteins.</text>
</comment>
<comment type="catalytic activity">
    <reaction evidence="1">
        <text>Release of signal peptides from bacterial membrane prolipoproteins. Hydrolyzes -Xaa-Yaa-Zaa-|-(S,diacylglyceryl)Cys-, in which Xaa is hydrophobic (preferably Leu), and Yaa (Ala or Ser) and Zaa (Gly or Ala) have small, neutral side chains.</text>
        <dbReference type="EC" id="3.4.23.36"/>
    </reaction>
</comment>
<comment type="pathway">
    <text evidence="1">Protein modification; lipoprotein biosynthesis (signal peptide cleavage).</text>
</comment>
<comment type="subcellular location">
    <subcellularLocation>
        <location evidence="1">Cell membrane</location>
        <topology evidence="1">Multi-pass membrane protein</topology>
    </subcellularLocation>
</comment>
<comment type="similarity">
    <text evidence="1">Belongs to the peptidase A8 family.</text>
</comment>
<name>LSPA_TROW8</name>
<reference key="1">
    <citation type="journal article" date="2003" name="Lancet">
        <title>Sequencing and analysis of the genome of the Whipple's disease bacterium Tropheryma whipplei.</title>
        <authorList>
            <person name="Bentley S.D."/>
            <person name="Maiwald M."/>
            <person name="Murphy L.D."/>
            <person name="Pallen M.J."/>
            <person name="Yeats C.A."/>
            <person name="Dover L.G."/>
            <person name="Norbertczak H.T."/>
            <person name="Besra G.S."/>
            <person name="Quail M.A."/>
            <person name="Harris D.E."/>
            <person name="von Herbay A."/>
            <person name="Goble A."/>
            <person name="Rutter S."/>
            <person name="Squares R."/>
            <person name="Squares S."/>
            <person name="Barrell B.G."/>
            <person name="Parkhill J."/>
            <person name="Relman D.A."/>
        </authorList>
    </citation>
    <scope>NUCLEOTIDE SEQUENCE [LARGE SCALE GENOMIC DNA]</scope>
    <source>
        <strain>TW08/27</strain>
    </source>
</reference>
<protein>
    <recommendedName>
        <fullName evidence="1">Lipoprotein signal peptidase</fullName>
        <ecNumber evidence="1">3.4.23.36</ecNumber>
    </recommendedName>
    <alternativeName>
        <fullName evidence="1">Prolipoprotein signal peptidase</fullName>
    </alternativeName>
    <alternativeName>
        <fullName evidence="1">Signal peptidase II</fullName>
        <shortName evidence="1">SPase II</shortName>
    </alternativeName>
</protein>
<keyword id="KW-0064">Aspartyl protease</keyword>
<keyword id="KW-1003">Cell membrane</keyword>
<keyword id="KW-0378">Hydrolase</keyword>
<keyword id="KW-0472">Membrane</keyword>
<keyword id="KW-0645">Protease</keyword>
<keyword id="KW-0812">Transmembrane</keyword>
<keyword id="KW-1133">Transmembrane helix</keyword>
<evidence type="ECO:0000255" key="1">
    <source>
        <dbReference type="HAMAP-Rule" id="MF_00161"/>
    </source>
</evidence>
<gene>
    <name evidence="1" type="primary">lspA</name>
    <name type="ordered locus">TW250</name>
</gene>
<proteinExistence type="inferred from homology"/>
<feature type="chain" id="PRO_0000289455" description="Lipoprotein signal peptidase">
    <location>
        <begin position="1"/>
        <end position="150"/>
    </location>
</feature>
<feature type="transmembrane region" description="Helical" evidence="1">
    <location>
        <begin position="8"/>
        <end position="28"/>
    </location>
</feature>
<feature type="transmembrane region" description="Helical" evidence="1">
    <location>
        <begin position="58"/>
        <end position="78"/>
    </location>
</feature>
<feature type="transmembrane region" description="Helical" evidence="1">
    <location>
        <begin position="81"/>
        <end position="101"/>
    </location>
</feature>
<feature type="transmembrane region" description="Helical" evidence="1">
    <location>
        <begin position="126"/>
        <end position="146"/>
    </location>
</feature>
<feature type="active site" evidence="1">
    <location>
        <position position="116"/>
    </location>
</feature>
<feature type="active site" evidence="1">
    <location>
        <position position="132"/>
    </location>
</feature>
<organism>
    <name type="scientific">Tropheryma whipplei (strain TW08/27)</name>
    <name type="common">Whipple's bacillus</name>
    <dbReference type="NCBI Taxonomy" id="218496"/>
    <lineage>
        <taxon>Bacteria</taxon>
        <taxon>Bacillati</taxon>
        <taxon>Actinomycetota</taxon>
        <taxon>Actinomycetes</taxon>
        <taxon>Micrococcales</taxon>
        <taxon>Tropherymataceae</taxon>
        <taxon>Tropheryma</taxon>
    </lineage>
</organism>
<dbReference type="EC" id="3.4.23.36" evidence="1"/>
<dbReference type="EMBL" id="BX251410">
    <property type="protein sequence ID" value="CAD66926.1"/>
    <property type="molecule type" value="Genomic_DNA"/>
</dbReference>
<dbReference type="SMR" id="Q83I41"/>
<dbReference type="KEGG" id="tws:TW250"/>
<dbReference type="HOGENOM" id="CLU_083252_2_2_11"/>
<dbReference type="UniPathway" id="UPA00665"/>
<dbReference type="GO" id="GO:0005886">
    <property type="term" value="C:plasma membrane"/>
    <property type="evidence" value="ECO:0007669"/>
    <property type="project" value="UniProtKB-SubCell"/>
</dbReference>
<dbReference type="GO" id="GO:0004190">
    <property type="term" value="F:aspartic-type endopeptidase activity"/>
    <property type="evidence" value="ECO:0007669"/>
    <property type="project" value="UniProtKB-UniRule"/>
</dbReference>
<dbReference type="GO" id="GO:0006508">
    <property type="term" value="P:proteolysis"/>
    <property type="evidence" value="ECO:0007669"/>
    <property type="project" value="UniProtKB-KW"/>
</dbReference>
<dbReference type="HAMAP" id="MF_00161">
    <property type="entry name" value="LspA"/>
    <property type="match status" value="1"/>
</dbReference>
<dbReference type="InterPro" id="IPR001872">
    <property type="entry name" value="Peptidase_A8"/>
</dbReference>
<dbReference type="PANTHER" id="PTHR33695">
    <property type="entry name" value="LIPOPROTEIN SIGNAL PEPTIDASE"/>
    <property type="match status" value="1"/>
</dbReference>
<dbReference type="PANTHER" id="PTHR33695:SF1">
    <property type="entry name" value="LIPOPROTEIN SIGNAL PEPTIDASE"/>
    <property type="match status" value="1"/>
</dbReference>
<dbReference type="Pfam" id="PF01252">
    <property type="entry name" value="Peptidase_A8"/>
    <property type="match status" value="1"/>
</dbReference>
<dbReference type="PRINTS" id="PR00781">
    <property type="entry name" value="LIPOSIGPTASE"/>
</dbReference>